<accession>Q63355</accession>
<comment type="function">
    <text evidence="4 8">Myosins are actin-based motor molecules with ATPase activity. Unconventional myosins serve in intracellular movements. Their highly divergent tails are presumed to bind to membranous compartments, which would be moved relative to actin filaments. Involved in glucose transporter recycling in response to insulin by regulating movement of intracellular GLUT4-containing vesicles to the plasma membrane. Component of the hair cell's (the sensory cells of the inner ear) adaptation-motor complex. Acts as a mediator of adaptation of mechanoelectrical transduction in stereocilia of vestibular hair cells. Binds phosphoinositides and links the actin cytoskeleton to cellular membranes (By similarity).</text>
</comment>
<comment type="subunit">
    <text evidence="2 4 8">Interacts (via its IQ motifs) with CABP1 and CIB1; the interaction with CABP1 and CIB1 is calcium-dependent (By similarity). Interacts (via tail domain) with PLEKHB1 (via PH domain); the interaction is not affected by the presence or absence of calcium and CALM (By similarity). Interacts with POLR1A (By similarity). Interacts with POLR2A (By similarity). Component of the B-WICH complex, at least composed of SMARCA5/SNF2H, BAZ1B/WSTF, SF3B1, DEK, MYO1C, ERCC6, MYBBP1A and DDX21 (By similarity). Interacts (via its IQ motifs) with CALM; this precludes interaction with YWHAB (By similarity). Interacts with YWHAB; this precludes interaction with CALM (By similarity). Interacts with RPS6 (By similarity). Interacts with actin (By similarity). Interacts with LLPH (By similarity). Interacts with GLUT4 (PubMed:22918957). Interacts (via its IQ motifs) with SH3BGRL3; the interaction is dependent on calcium and takes place at membrane ruffles (By similarity).</text>
</comment>
<comment type="subcellular location">
    <subcellularLocation>
        <location evidence="2">Cytoplasm</location>
    </subcellularLocation>
    <subcellularLocation>
        <location evidence="2">Nucleus</location>
    </subcellularLocation>
    <subcellularLocation>
        <location evidence="4">Cytoplasm</location>
        <location evidence="4">Cell cortex</location>
    </subcellularLocation>
    <subcellularLocation>
        <location evidence="3">Cell projection</location>
        <location evidence="3">Stereocilium membrane</location>
    </subcellularLocation>
    <subcellularLocation>
        <location evidence="8">Cytoplasmic vesicle</location>
    </subcellularLocation>
    <subcellularLocation>
        <location evidence="8">Cell projection</location>
        <location evidence="8">Ruffle membrane</location>
    </subcellularLocation>
    <text evidence="2 4 8">Colocalizes with CABP1 and CIB1 at cell margin, membrane ruffles and punctate regions on the cell membrane (By similarity). Colocalizes in adipocytes with GLUT4 at actin-based membranes (By similarity). Colocalizes with GLUT4 at insulin-induced ruffles at the cell membrane (PubMed:22918957). Localizes transiently at cell membrane to region known to be enriched in PIP2 (By similarity). Activation of phospholipase C results in its redistribution to the cytoplasm (By similarity). Colocalizes with RNA polymerase II (By similarity). Translocates to nuclear speckles upon exposure to inhibitors of RNA polymerase II transcription (By similarity).</text>
</comment>
<comment type="domain">
    <text evidence="4">Binds directly to large unilamellar vesicles (LUVs) containing phosphatidylinositol 4,5-bisphosphate (PIP2) or inositol 1,4,5-trisphosphate (InsP3). The PIP2-binding site corresponds to a putative PH domain present in its tail domain.</text>
</comment>
<comment type="similarity">
    <text evidence="9">Belongs to the TRAFAC class myosin-kinesin ATPase superfamily. Myosin family.</text>
</comment>
<comment type="caution">
    <text evidence="9">Represents an unconventional myosin. This protein should not be confused with the conventional myosin-1 (MYH1).</text>
</comment>
<comment type="sequence caution" evidence="9">
    <conflict type="erroneous initiation">
        <sequence resource="EMBL-CDS" id="CAA52807"/>
    </conflict>
</comment>
<name>MYO1C_RAT</name>
<feature type="chain" id="PRO_0000369414" description="Unconventional myosin-Ic">
    <location>
        <begin position="1"/>
        <end position="1044"/>
    </location>
</feature>
<feature type="domain" description="Myosin motor" evidence="6">
    <location>
        <begin position="28"/>
        <end position="712"/>
    </location>
</feature>
<feature type="domain" description="IQ 1" evidence="5">
    <location>
        <begin position="715"/>
        <end position="744"/>
    </location>
</feature>
<feature type="domain" description="IQ 2" evidence="5">
    <location>
        <begin position="738"/>
        <end position="767"/>
    </location>
</feature>
<feature type="domain" description="TH1" evidence="7">
    <location>
        <begin position="866"/>
        <end position="1040"/>
    </location>
</feature>
<feature type="region of interest" description="Actin-binding" evidence="6">
    <location>
        <begin position="589"/>
        <end position="611"/>
    </location>
</feature>
<feature type="binding site" evidence="1">
    <location>
        <position position="69"/>
    </location>
    <ligand>
        <name>ATP</name>
        <dbReference type="ChEBI" id="CHEBI:30616"/>
    </ligand>
</feature>
<feature type="binding site" evidence="1">
    <location>
        <position position="77"/>
    </location>
    <ligand>
        <name>ATP</name>
        <dbReference type="ChEBI" id="CHEBI:30616"/>
    </ligand>
</feature>
<feature type="binding site" evidence="1">
    <location>
        <begin position="120"/>
        <end position="129"/>
    </location>
    <ligand>
        <name>ATP</name>
        <dbReference type="ChEBI" id="CHEBI:30616"/>
    </ligand>
</feature>
<feature type="binding site" evidence="1">
    <location>
        <begin position="173"/>
        <end position="177"/>
    </location>
    <ligand>
        <name>ATP</name>
        <dbReference type="ChEBI" id="CHEBI:30616"/>
    </ligand>
</feature>
<feature type="modified residue" description="N6-methyllysine" evidence="2">
    <location>
        <position position="364"/>
    </location>
</feature>
<feature type="modified residue" description="Phosphoserine" evidence="10">
    <location>
        <position position="389"/>
    </location>
</feature>
<feature type="modified residue" description="N6-acetyllysine" evidence="4">
    <location>
        <position position="467"/>
    </location>
</feature>
<feature type="modified residue" description="Phosphoserine" evidence="10">
    <location>
        <position position="517"/>
    </location>
</feature>
<feature type="modified residue" description="Phosphoserine" evidence="10">
    <location>
        <position position="845"/>
    </location>
</feature>
<feature type="modified residue" description="Phosphoserine" evidence="10">
    <location>
        <position position="1022"/>
    </location>
</feature>
<organism>
    <name type="scientific">Rattus norvegicus</name>
    <name type="common">Rat</name>
    <dbReference type="NCBI Taxonomy" id="10116"/>
    <lineage>
        <taxon>Eukaryota</taxon>
        <taxon>Metazoa</taxon>
        <taxon>Chordata</taxon>
        <taxon>Craniata</taxon>
        <taxon>Vertebrata</taxon>
        <taxon>Euteleostomi</taxon>
        <taxon>Mammalia</taxon>
        <taxon>Eutheria</taxon>
        <taxon>Euarchontoglires</taxon>
        <taxon>Glires</taxon>
        <taxon>Rodentia</taxon>
        <taxon>Myomorpha</taxon>
        <taxon>Muroidea</taxon>
        <taxon>Muridae</taxon>
        <taxon>Murinae</taxon>
        <taxon>Rattus</taxon>
    </lineage>
</organism>
<dbReference type="EMBL" id="X74800">
    <property type="protein sequence ID" value="CAA52807.1"/>
    <property type="status" value="ALT_INIT"/>
    <property type="molecule type" value="mRNA"/>
</dbReference>
<dbReference type="PIR" id="S37146">
    <property type="entry name" value="S37146"/>
</dbReference>
<dbReference type="RefSeq" id="NP_075580.2">
    <property type="nucleotide sequence ID" value="NM_023092.3"/>
</dbReference>
<dbReference type="SMR" id="Q63355"/>
<dbReference type="BioGRID" id="249326">
    <property type="interactions" value="3"/>
</dbReference>
<dbReference type="FunCoup" id="Q63355">
    <property type="interactions" value="1274"/>
</dbReference>
<dbReference type="IntAct" id="Q63355">
    <property type="interactions" value="3"/>
</dbReference>
<dbReference type="STRING" id="10116.ENSRNOP00000028929"/>
<dbReference type="GlyGen" id="Q63355">
    <property type="glycosylation" value="1 site"/>
</dbReference>
<dbReference type="iPTMnet" id="Q63355"/>
<dbReference type="PhosphoSitePlus" id="Q63355"/>
<dbReference type="SwissPalm" id="Q63355"/>
<dbReference type="jPOST" id="Q63355"/>
<dbReference type="PaxDb" id="10116-ENSRNOP00000028929"/>
<dbReference type="GeneID" id="65261"/>
<dbReference type="KEGG" id="rno:65261"/>
<dbReference type="AGR" id="RGD:620443"/>
<dbReference type="CTD" id="4641"/>
<dbReference type="RGD" id="620443">
    <property type="gene designation" value="Myo1c"/>
</dbReference>
<dbReference type="VEuPathDB" id="HostDB:ENSRNOG00000004072"/>
<dbReference type="eggNOG" id="KOG0164">
    <property type="taxonomic scope" value="Eukaryota"/>
</dbReference>
<dbReference type="HOGENOM" id="CLU_000192_7_7_1"/>
<dbReference type="InParanoid" id="Q63355"/>
<dbReference type="Reactome" id="R-RNO-2029482">
    <property type="pathway name" value="Regulation of actin dynamics for phagocytic cup formation"/>
</dbReference>
<dbReference type="Reactome" id="R-RNO-5250924">
    <property type="pathway name" value="B-WICH complex positively regulates rRNA expression"/>
</dbReference>
<dbReference type="PRO" id="PR:Q63355"/>
<dbReference type="Proteomes" id="UP000002494">
    <property type="component" value="Chromosome 10"/>
</dbReference>
<dbReference type="Bgee" id="ENSRNOG00000004072">
    <property type="expression patterns" value="Expressed in lung and 18 other cell types or tissues"/>
</dbReference>
<dbReference type="GO" id="GO:0015629">
    <property type="term" value="C:actin cytoskeleton"/>
    <property type="evidence" value="ECO:0000318"/>
    <property type="project" value="GO_Central"/>
</dbReference>
<dbReference type="GO" id="GO:0009925">
    <property type="term" value="C:basal plasma membrane"/>
    <property type="evidence" value="ECO:0000266"/>
    <property type="project" value="RGD"/>
</dbReference>
<dbReference type="GO" id="GO:0005903">
    <property type="term" value="C:brush border"/>
    <property type="evidence" value="ECO:0000266"/>
    <property type="project" value="RGD"/>
</dbReference>
<dbReference type="GO" id="GO:0005938">
    <property type="term" value="C:cell cortex"/>
    <property type="evidence" value="ECO:0007669"/>
    <property type="project" value="UniProtKB-SubCell"/>
</dbReference>
<dbReference type="GO" id="GO:0005737">
    <property type="term" value="C:cytoplasm"/>
    <property type="evidence" value="ECO:0000266"/>
    <property type="project" value="RGD"/>
</dbReference>
<dbReference type="GO" id="GO:0030659">
    <property type="term" value="C:cytoplasmic vesicle membrane"/>
    <property type="evidence" value="ECO:0000266"/>
    <property type="project" value="RGD"/>
</dbReference>
<dbReference type="GO" id="GO:0031941">
    <property type="term" value="C:filamentous actin"/>
    <property type="evidence" value="ECO:0000266"/>
    <property type="project" value="RGD"/>
</dbReference>
<dbReference type="GO" id="GO:0016328">
    <property type="term" value="C:lateral plasma membrane"/>
    <property type="evidence" value="ECO:0000266"/>
    <property type="project" value="RGD"/>
</dbReference>
<dbReference type="GO" id="GO:0016020">
    <property type="term" value="C:membrane"/>
    <property type="evidence" value="ECO:0000266"/>
    <property type="project" value="RGD"/>
</dbReference>
<dbReference type="GO" id="GO:0045121">
    <property type="term" value="C:membrane raft"/>
    <property type="evidence" value="ECO:0000314"/>
    <property type="project" value="UniProtKB"/>
</dbReference>
<dbReference type="GO" id="GO:0005902">
    <property type="term" value="C:microvillus"/>
    <property type="evidence" value="ECO:0000266"/>
    <property type="project" value="RGD"/>
</dbReference>
<dbReference type="GO" id="GO:0016459">
    <property type="term" value="C:myosin complex"/>
    <property type="evidence" value="ECO:0007669"/>
    <property type="project" value="UniProtKB-KW"/>
</dbReference>
<dbReference type="GO" id="GO:0005634">
    <property type="term" value="C:nucleus"/>
    <property type="evidence" value="ECO:0007669"/>
    <property type="project" value="UniProtKB-SubCell"/>
</dbReference>
<dbReference type="GO" id="GO:0045335">
    <property type="term" value="C:phagocytic vesicle"/>
    <property type="evidence" value="ECO:0000266"/>
    <property type="project" value="RGD"/>
</dbReference>
<dbReference type="GO" id="GO:0005886">
    <property type="term" value="C:plasma membrane"/>
    <property type="evidence" value="ECO:0000266"/>
    <property type="project" value="RGD"/>
</dbReference>
<dbReference type="GO" id="GO:0032587">
    <property type="term" value="C:ruffle membrane"/>
    <property type="evidence" value="ECO:0000314"/>
    <property type="project" value="RGD"/>
</dbReference>
<dbReference type="GO" id="GO:0032420">
    <property type="term" value="C:stereocilium"/>
    <property type="evidence" value="ECO:0000266"/>
    <property type="project" value="RGD"/>
</dbReference>
<dbReference type="GO" id="GO:0032421">
    <property type="term" value="C:stereocilium bundle"/>
    <property type="evidence" value="ECO:0000314"/>
    <property type="project" value="RGD"/>
</dbReference>
<dbReference type="GO" id="GO:0060171">
    <property type="term" value="C:stereocilium membrane"/>
    <property type="evidence" value="ECO:0007669"/>
    <property type="project" value="UniProtKB-SubCell"/>
</dbReference>
<dbReference type="GO" id="GO:0051015">
    <property type="term" value="F:actin filament binding"/>
    <property type="evidence" value="ECO:0000314"/>
    <property type="project" value="RGD"/>
</dbReference>
<dbReference type="GO" id="GO:0005524">
    <property type="term" value="F:ATP binding"/>
    <property type="evidence" value="ECO:0007669"/>
    <property type="project" value="UniProtKB-KW"/>
</dbReference>
<dbReference type="GO" id="GO:0005516">
    <property type="term" value="F:calmodulin binding"/>
    <property type="evidence" value="ECO:0000314"/>
    <property type="project" value="RGD"/>
</dbReference>
<dbReference type="GO" id="GO:0000146">
    <property type="term" value="F:microfilament motor activity"/>
    <property type="evidence" value="ECO:0000314"/>
    <property type="project" value="RGD"/>
</dbReference>
<dbReference type="GO" id="GO:0005102">
    <property type="term" value="F:signaling receptor binding"/>
    <property type="evidence" value="ECO:0000266"/>
    <property type="project" value="RGD"/>
</dbReference>
<dbReference type="GO" id="GO:0031267">
    <property type="term" value="F:small GTPase binding"/>
    <property type="evidence" value="ECO:0000266"/>
    <property type="project" value="RGD"/>
</dbReference>
<dbReference type="GO" id="GO:0007015">
    <property type="term" value="P:actin filament organization"/>
    <property type="evidence" value="ECO:0000318"/>
    <property type="project" value="GO_Central"/>
</dbReference>
<dbReference type="GO" id="GO:0030048">
    <property type="term" value="P:actin filament-based movement"/>
    <property type="evidence" value="ECO:0000318"/>
    <property type="project" value="GO_Central"/>
</dbReference>
<dbReference type="GO" id="GO:0071346">
    <property type="term" value="P:cellular response to type II interferon"/>
    <property type="evidence" value="ECO:0000266"/>
    <property type="project" value="RGD"/>
</dbReference>
<dbReference type="GO" id="GO:0006897">
    <property type="term" value="P:endocytosis"/>
    <property type="evidence" value="ECO:0000318"/>
    <property type="project" value="GO_Central"/>
</dbReference>
<dbReference type="GO" id="GO:0030838">
    <property type="term" value="P:positive regulation of actin filament polymerization"/>
    <property type="evidence" value="ECO:0000315"/>
    <property type="project" value="RGD"/>
</dbReference>
<dbReference type="GO" id="GO:0030335">
    <property type="term" value="P:positive regulation of cell migration"/>
    <property type="evidence" value="ECO:0000266"/>
    <property type="project" value="RGD"/>
</dbReference>
<dbReference type="GO" id="GO:1900078">
    <property type="term" value="P:positive regulation of cellular response to insulin stimulus"/>
    <property type="evidence" value="ECO:0000315"/>
    <property type="project" value="RGD"/>
</dbReference>
<dbReference type="GO" id="GO:0090314">
    <property type="term" value="P:positive regulation of protein targeting to membrane"/>
    <property type="evidence" value="ECO:0000266"/>
    <property type="project" value="RGD"/>
</dbReference>
<dbReference type="GO" id="GO:0006612">
    <property type="term" value="P:protein targeting to membrane"/>
    <property type="evidence" value="ECO:0000266"/>
    <property type="project" value="RGD"/>
</dbReference>
<dbReference type="GO" id="GO:0015031">
    <property type="term" value="P:protein transport"/>
    <property type="evidence" value="ECO:0007669"/>
    <property type="project" value="UniProtKB-KW"/>
</dbReference>
<dbReference type="GO" id="GO:2000810">
    <property type="term" value="P:regulation of bicellular tight junction assembly"/>
    <property type="evidence" value="ECO:0000266"/>
    <property type="project" value="RGD"/>
</dbReference>
<dbReference type="GO" id="GO:0038084">
    <property type="term" value="P:vascular endothelial growth factor signaling pathway"/>
    <property type="evidence" value="ECO:0000266"/>
    <property type="project" value="RGD"/>
</dbReference>
<dbReference type="GO" id="GO:0030050">
    <property type="term" value="P:vesicle transport along actin filament"/>
    <property type="evidence" value="ECO:0000266"/>
    <property type="project" value="RGD"/>
</dbReference>
<dbReference type="CDD" id="cd23766">
    <property type="entry name" value="IQCG"/>
    <property type="match status" value="1"/>
</dbReference>
<dbReference type="CDD" id="cd01378">
    <property type="entry name" value="MYSc_Myo1"/>
    <property type="match status" value="1"/>
</dbReference>
<dbReference type="FunFam" id="1.10.10.820:FF:000001">
    <property type="entry name" value="Myosin heavy chain"/>
    <property type="match status" value="1"/>
</dbReference>
<dbReference type="FunFam" id="3.40.850.10:FF:000101">
    <property type="entry name" value="Slow myosin heavy chain 2"/>
    <property type="match status" value="1"/>
</dbReference>
<dbReference type="FunFam" id="1.20.58.530:FF:000004">
    <property type="entry name" value="Unconventional myosin ID"/>
    <property type="match status" value="1"/>
</dbReference>
<dbReference type="FunFam" id="1.20.5.190:FF:000017">
    <property type="entry name" value="unconventional myosin-Ic isoform X1"/>
    <property type="match status" value="1"/>
</dbReference>
<dbReference type="FunFam" id="1.20.120.720:FF:000013">
    <property type="entry name" value="unconventional myosin-Ic isoform X2"/>
    <property type="match status" value="1"/>
</dbReference>
<dbReference type="Gene3D" id="1.10.10.820">
    <property type="match status" value="1"/>
</dbReference>
<dbReference type="Gene3D" id="1.20.5.190">
    <property type="match status" value="1"/>
</dbReference>
<dbReference type="Gene3D" id="1.20.58.530">
    <property type="match status" value="1"/>
</dbReference>
<dbReference type="Gene3D" id="6.20.240.20">
    <property type="match status" value="1"/>
</dbReference>
<dbReference type="Gene3D" id="3.40.850.10">
    <property type="entry name" value="Kinesin motor domain"/>
    <property type="match status" value="1"/>
</dbReference>
<dbReference type="Gene3D" id="1.20.120.720">
    <property type="entry name" value="Myosin VI head, motor domain, U50 subdomain"/>
    <property type="match status" value="1"/>
</dbReference>
<dbReference type="InterPro" id="IPR000048">
    <property type="entry name" value="IQ_motif_EF-hand-BS"/>
</dbReference>
<dbReference type="InterPro" id="IPR036961">
    <property type="entry name" value="Kinesin_motor_dom_sf"/>
</dbReference>
<dbReference type="InterPro" id="IPR001609">
    <property type="entry name" value="Myosin_head_motor_dom-like"/>
</dbReference>
<dbReference type="InterPro" id="IPR010926">
    <property type="entry name" value="Myosin_TH1"/>
</dbReference>
<dbReference type="InterPro" id="IPR036072">
    <property type="entry name" value="MYSc_Myo1"/>
</dbReference>
<dbReference type="InterPro" id="IPR027417">
    <property type="entry name" value="P-loop_NTPase"/>
</dbReference>
<dbReference type="PANTHER" id="PTHR13140">
    <property type="entry name" value="MYOSIN"/>
    <property type="match status" value="1"/>
</dbReference>
<dbReference type="PANTHER" id="PTHR13140:SF255">
    <property type="entry name" value="UNCONVENTIONAL MYOSIN-IC"/>
    <property type="match status" value="1"/>
</dbReference>
<dbReference type="Pfam" id="PF00612">
    <property type="entry name" value="IQ"/>
    <property type="match status" value="2"/>
</dbReference>
<dbReference type="Pfam" id="PF00063">
    <property type="entry name" value="Myosin_head"/>
    <property type="match status" value="1"/>
</dbReference>
<dbReference type="Pfam" id="PF06017">
    <property type="entry name" value="Myosin_TH1"/>
    <property type="match status" value="1"/>
</dbReference>
<dbReference type="PRINTS" id="PR00193">
    <property type="entry name" value="MYOSINHEAVY"/>
</dbReference>
<dbReference type="SMART" id="SM00015">
    <property type="entry name" value="IQ"/>
    <property type="match status" value="2"/>
</dbReference>
<dbReference type="SMART" id="SM00242">
    <property type="entry name" value="MYSc"/>
    <property type="match status" value="1"/>
</dbReference>
<dbReference type="SUPFAM" id="SSF52540">
    <property type="entry name" value="P-loop containing nucleoside triphosphate hydrolases"/>
    <property type="match status" value="1"/>
</dbReference>
<dbReference type="PROSITE" id="PS50096">
    <property type="entry name" value="IQ"/>
    <property type="match status" value="2"/>
</dbReference>
<dbReference type="PROSITE" id="PS51456">
    <property type="entry name" value="MYOSIN_MOTOR"/>
    <property type="match status" value="1"/>
</dbReference>
<dbReference type="PROSITE" id="PS51757">
    <property type="entry name" value="TH1"/>
    <property type="match status" value="1"/>
</dbReference>
<keyword id="KW-0007">Acetylation</keyword>
<keyword id="KW-0009">Actin-binding</keyword>
<keyword id="KW-0067">ATP-binding</keyword>
<keyword id="KW-0112">Calmodulin-binding</keyword>
<keyword id="KW-1003">Cell membrane</keyword>
<keyword id="KW-0966">Cell projection</keyword>
<keyword id="KW-0963">Cytoplasm</keyword>
<keyword id="KW-0968">Cytoplasmic vesicle</keyword>
<keyword id="KW-0472">Membrane</keyword>
<keyword id="KW-0488">Methylation</keyword>
<keyword id="KW-0505">Motor protein</keyword>
<keyword id="KW-0518">Myosin</keyword>
<keyword id="KW-0547">Nucleotide-binding</keyword>
<keyword id="KW-0539">Nucleus</keyword>
<keyword id="KW-0597">Phosphoprotein</keyword>
<keyword id="KW-0653">Protein transport</keyword>
<keyword id="KW-1185">Reference proteome</keyword>
<keyword id="KW-0677">Repeat</keyword>
<keyword id="KW-0811">Translocation</keyword>
<keyword id="KW-0813">Transport</keyword>
<sequence length="1044" mass="119811">MRYRASALGSDGVRVTMESALTARDRVGVQDFVLLENFTSEAAFIENLRRRFRENLIYTYIGPVLVSVNPYRDLQIYTRQHMERYRGVSFYEVPPHLFAVADTVYRALRTERRDQAVMISGESGAGKTEATKRLLQFYAETCPAPERGGAVRDRLLQSNPVLEAFGNAKTLRNDNSSRFGKYMDVQFDFKGAPVGGHILSYLLEKSRVVHQNHGERNFHVFYQLLEGGEEEALRRLGLERNPQSYLYLVKGQCAKVSSINDKSDWKVVRKALSVIDFTEDEVEDLLSIVASVLHLGNIHFAADEDSNAQVTTENQLKYLTRLLGVEGTTLREALTHRKIIAKGEELLSPLNLEQAAYARDALAKAVYSRTFTWLVRKINRSLASKDAESPSWRSTTVLGLLDIYGFEVFQHNSFEQFCINYCNEKLQQLFIELTLKSEQEEYEAEGIAWEPVQYFNNKIICDLVEEKFKGIISILDEECLRPGEATDLTFLEKLEDTIKHHPHFLTHKLADQKTRKSLDRGEFRLLHYAGEVTYSVTGFLDKNNDLLFRNLKETMCSSTNPIMAQCFDKSELSDKKRPETVATQFKMSLLQLVEILRSKEPAYIRCIKPNDAKQPGRFDEVLIRHQVKYLGLMENLRVRRAGFAYRRKYEAFLQRYKSLCPETWPVWTGRPQDGVAVLVRHLGYKPEEYKMGRTKIFIRFPKTLFATEDSLEVRRQSLATKIQAAWRGFHWRQKFLRVKRSAICIQSWWRGTLGRRKAAKRKWAAQTIRRLIRGFILRHAPRCPENAFFLDHVRTSFLLNLRRQLPRNVLDTSWPTPPPALREASELLRELCMKNMVWKYCRSISPEWKQQLQQKAVASEIFKGKKDNYPQSVPRLFISTRLGTEEISPRVLQALGSEPIQYAVPVVKYDRKGYKPRSRQLLLTPSAVVIVEDAKVKQRIDYANLTGISVSSLSDSLFVLHVQREDSKQKGDVVLQSDHVIETLTKTALSADRVNNININQGSITFAGGPGRDGIIDFTSGSELLITKAKNGHLAVVAPRLNSR</sequence>
<proteinExistence type="evidence at protein level"/>
<evidence type="ECO:0000250" key="1"/>
<evidence type="ECO:0000250" key="2">
    <source>
        <dbReference type="UniProtKB" id="O00159"/>
    </source>
</evidence>
<evidence type="ECO:0000250" key="3">
    <source>
        <dbReference type="UniProtKB" id="Q92002"/>
    </source>
</evidence>
<evidence type="ECO:0000250" key="4">
    <source>
        <dbReference type="UniProtKB" id="Q9WTI7"/>
    </source>
</evidence>
<evidence type="ECO:0000255" key="5">
    <source>
        <dbReference type="PROSITE-ProRule" id="PRU00116"/>
    </source>
</evidence>
<evidence type="ECO:0000255" key="6">
    <source>
        <dbReference type="PROSITE-ProRule" id="PRU00782"/>
    </source>
</evidence>
<evidence type="ECO:0000255" key="7">
    <source>
        <dbReference type="PROSITE-ProRule" id="PRU01093"/>
    </source>
</evidence>
<evidence type="ECO:0000269" key="8">
    <source>
    </source>
</evidence>
<evidence type="ECO:0000305" key="9"/>
<evidence type="ECO:0007744" key="10">
    <source>
    </source>
</evidence>
<protein>
    <recommendedName>
        <fullName>Unconventional myosin-Ic</fullName>
    </recommendedName>
    <alternativeName>
        <fullName>Myosin I beta</fullName>
        <shortName>MMI-beta</shortName>
        <shortName>MMIb</shortName>
    </alternativeName>
    <alternativeName>
        <fullName>Myosin heavy chain myr 2</fullName>
    </alternativeName>
</protein>
<gene>
    <name type="primary">Myo1c</name>
    <name type="synonym">Myr2</name>
</gene>
<reference key="1">
    <citation type="submission" date="1993-08" db="EMBL/GenBank/DDBJ databases">
        <title>MYR-2 a novel class-I myosin identified in rat brain.</title>
        <authorList>
            <person name="Ruppert C."/>
            <person name="Godel J."/>
            <person name="Reinhard J."/>
            <person name="Baehler M."/>
        </authorList>
    </citation>
    <scope>NUCLEOTIDE SEQUENCE [MRNA]</scope>
    <source>
        <strain>Sprague-Dawley</strain>
    </source>
</reference>
<reference key="2">
    <citation type="journal article" date="2012" name="Mol. Biol. Cell">
        <title>Myo1c binding to submembrane actin mediates insulin-induced tethering of GLUT4 vesicles.</title>
        <authorList>
            <person name="Boguslavsky S."/>
            <person name="Chiu T."/>
            <person name="Foley K.P."/>
            <person name="Osorio-Fuentealba C."/>
            <person name="Antonescu C.N."/>
            <person name="Bayer K.U."/>
            <person name="Bilan P.J."/>
            <person name="Klip A."/>
        </authorList>
    </citation>
    <scope>FUNCTION</scope>
    <scope>SUBCELLULAR LOCATION</scope>
    <scope>INTERACTION WITH GLUT4</scope>
</reference>
<reference key="3">
    <citation type="journal article" date="2012" name="Nat. Commun.">
        <title>Quantitative maps of protein phosphorylation sites across 14 different rat organs and tissues.</title>
        <authorList>
            <person name="Lundby A."/>
            <person name="Secher A."/>
            <person name="Lage K."/>
            <person name="Nordsborg N.B."/>
            <person name="Dmytriyev A."/>
            <person name="Lundby C."/>
            <person name="Olsen J.V."/>
        </authorList>
    </citation>
    <scope>PHOSPHORYLATION [LARGE SCALE ANALYSIS] AT SER-389; SER-517; SER-845 AND SER-1022</scope>
    <scope>IDENTIFICATION BY MASS SPECTROMETRY [LARGE SCALE ANALYSIS]</scope>
</reference>